<comment type="similarity">
    <text evidence="1">Belongs to the bacterial ribosomal protein bS16 family.</text>
</comment>
<sequence>MLAIRLSRGGSRKRPFYHVVATDSRNARDSNFIERLGFFNPQARGQEEELRLDLERIEYWQSQGGQISDRVKSLIKQYKKSANK</sequence>
<gene>
    <name evidence="1" type="primary">rpsP</name>
    <name type="ordered locus">DNO_1007</name>
</gene>
<feature type="chain" id="PRO_1000049253" description="Small ribosomal subunit protein bS16">
    <location>
        <begin position="1"/>
        <end position="84"/>
    </location>
</feature>
<keyword id="KW-1185">Reference proteome</keyword>
<keyword id="KW-0687">Ribonucleoprotein</keyword>
<keyword id="KW-0689">Ribosomal protein</keyword>
<dbReference type="EMBL" id="CP000513">
    <property type="protein sequence ID" value="ABQ14189.1"/>
    <property type="molecule type" value="Genomic_DNA"/>
</dbReference>
<dbReference type="RefSeq" id="WP_012031319.1">
    <property type="nucleotide sequence ID" value="NC_009446.1"/>
</dbReference>
<dbReference type="SMR" id="A5EXZ1"/>
<dbReference type="STRING" id="246195.DNO_1007"/>
<dbReference type="KEGG" id="dno:DNO_1007"/>
<dbReference type="eggNOG" id="COG0228">
    <property type="taxonomic scope" value="Bacteria"/>
</dbReference>
<dbReference type="HOGENOM" id="CLU_100590_5_1_6"/>
<dbReference type="OrthoDB" id="9807878at2"/>
<dbReference type="Proteomes" id="UP000000248">
    <property type="component" value="Chromosome"/>
</dbReference>
<dbReference type="GO" id="GO:0005737">
    <property type="term" value="C:cytoplasm"/>
    <property type="evidence" value="ECO:0007669"/>
    <property type="project" value="UniProtKB-ARBA"/>
</dbReference>
<dbReference type="GO" id="GO:0015935">
    <property type="term" value="C:small ribosomal subunit"/>
    <property type="evidence" value="ECO:0007669"/>
    <property type="project" value="TreeGrafter"/>
</dbReference>
<dbReference type="GO" id="GO:0003735">
    <property type="term" value="F:structural constituent of ribosome"/>
    <property type="evidence" value="ECO:0007669"/>
    <property type="project" value="InterPro"/>
</dbReference>
<dbReference type="GO" id="GO:0006412">
    <property type="term" value="P:translation"/>
    <property type="evidence" value="ECO:0007669"/>
    <property type="project" value="UniProtKB-UniRule"/>
</dbReference>
<dbReference type="Gene3D" id="3.30.1320.10">
    <property type="match status" value="1"/>
</dbReference>
<dbReference type="HAMAP" id="MF_00385">
    <property type="entry name" value="Ribosomal_bS16"/>
    <property type="match status" value="1"/>
</dbReference>
<dbReference type="InterPro" id="IPR000307">
    <property type="entry name" value="Ribosomal_bS16"/>
</dbReference>
<dbReference type="InterPro" id="IPR023803">
    <property type="entry name" value="Ribosomal_bS16_dom_sf"/>
</dbReference>
<dbReference type="NCBIfam" id="TIGR00002">
    <property type="entry name" value="S16"/>
    <property type="match status" value="1"/>
</dbReference>
<dbReference type="PANTHER" id="PTHR12919">
    <property type="entry name" value="30S RIBOSOMAL PROTEIN S16"/>
    <property type="match status" value="1"/>
</dbReference>
<dbReference type="PANTHER" id="PTHR12919:SF20">
    <property type="entry name" value="SMALL RIBOSOMAL SUBUNIT PROTEIN BS16M"/>
    <property type="match status" value="1"/>
</dbReference>
<dbReference type="Pfam" id="PF00886">
    <property type="entry name" value="Ribosomal_S16"/>
    <property type="match status" value="1"/>
</dbReference>
<dbReference type="SUPFAM" id="SSF54565">
    <property type="entry name" value="Ribosomal protein S16"/>
    <property type="match status" value="1"/>
</dbReference>
<evidence type="ECO:0000255" key="1">
    <source>
        <dbReference type="HAMAP-Rule" id="MF_00385"/>
    </source>
</evidence>
<evidence type="ECO:0000305" key="2"/>
<name>RS16_DICNV</name>
<proteinExistence type="inferred from homology"/>
<organism>
    <name type="scientific">Dichelobacter nodosus (strain VCS1703A)</name>
    <dbReference type="NCBI Taxonomy" id="246195"/>
    <lineage>
        <taxon>Bacteria</taxon>
        <taxon>Pseudomonadati</taxon>
        <taxon>Pseudomonadota</taxon>
        <taxon>Gammaproteobacteria</taxon>
        <taxon>Cardiobacteriales</taxon>
        <taxon>Cardiobacteriaceae</taxon>
        <taxon>Dichelobacter</taxon>
    </lineage>
</organism>
<reference key="1">
    <citation type="journal article" date="2007" name="Nat. Biotechnol.">
        <title>Genome sequence and identification of candidate vaccine antigens from the animal pathogen Dichelobacter nodosus.</title>
        <authorList>
            <person name="Myers G.S.A."/>
            <person name="Parker D."/>
            <person name="Al-Hasani K."/>
            <person name="Kennan R.M."/>
            <person name="Seemann T."/>
            <person name="Ren Q."/>
            <person name="Badger J.H."/>
            <person name="Selengut J.D."/>
            <person name="Deboy R.T."/>
            <person name="Tettelin H."/>
            <person name="Boyce J.D."/>
            <person name="McCarl V.P."/>
            <person name="Han X."/>
            <person name="Nelson W.C."/>
            <person name="Madupu R."/>
            <person name="Mohamoud Y."/>
            <person name="Holley T."/>
            <person name="Fedorova N."/>
            <person name="Khouri H."/>
            <person name="Bottomley S.P."/>
            <person name="Whittington R.J."/>
            <person name="Adler B."/>
            <person name="Songer J.G."/>
            <person name="Rood J.I."/>
            <person name="Paulsen I.T."/>
        </authorList>
    </citation>
    <scope>NUCLEOTIDE SEQUENCE [LARGE SCALE GENOMIC DNA]</scope>
    <source>
        <strain>VCS1703A</strain>
    </source>
</reference>
<accession>A5EXZ1</accession>
<protein>
    <recommendedName>
        <fullName evidence="1">Small ribosomal subunit protein bS16</fullName>
    </recommendedName>
    <alternativeName>
        <fullName evidence="2">30S ribosomal protein S16</fullName>
    </alternativeName>
</protein>